<protein>
    <recommendedName>
        <fullName evidence="1">Large ribosomal subunit protein uL14</fullName>
    </recommendedName>
    <alternativeName>
        <fullName evidence="2">50S ribosomal protein L14</fullName>
    </alternativeName>
</protein>
<dbReference type="EMBL" id="CP000539">
    <property type="protein sequence ID" value="ABM40643.1"/>
    <property type="molecule type" value="Genomic_DNA"/>
</dbReference>
<dbReference type="SMR" id="A1W318"/>
<dbReference type="STRING" id="232721.Ajs_0391"/>
<dbReference type="KEGG" id="ajs:Ajs_0391"/>
<dbReference type="eggNOG" id="COG0093">
    <property type="taxonomic scope" value="Bacteria"/>
</dbReference>
<dbReference type="HOGENOM" id="CLU_095071_2_1_4"/>
<dbReference type="Proteomes" id="UP000000645">
    <property type="component" value="Chromosome"/>
</dbReference>
<dbReference type="GO" id="GO:0022625">
    <property type="term" value="C:cytosolic large ribosomal subunit"/>
    <property type="evidence" value="ECO:0007669"/>
    <property type="project" value="TreeGrafter"/>
</dbReference>
<dbReference type="GO" id="GO:0070180">
    <property type="term" value="F:large ribosomal subunit rRNA binding"/>
    <property type="evidence" value="ECO:0007669"/>
    <property type="project" value="TreeGrafter"/>
</dbReference>
<dbReference type="GO" id="GO:0003735">
    <property type="term" value="F:structural constituent of ribosome"/>
    <property type="evidence" value="ECO:0007669"/>
    <property type="project" value="InterPro"/>
</dbReference>
<dbReference type="GO" id="GO:0006412">
    <property type="term" value="P:translation"/>
    <property type="evidence" value="ECO:0007669"/>
    <property type="project" value="UniProtKB-UniRule"/>
</dbReference>
<dbReference type="CDD" id="cd00337">
    <property type="entry name" value="Ribosomal_uL14"/>
    <property type="match status" value="1"/>
</dbReference>
<dbReference type="FunFam" id="2.40.150.20:FF:000001">
    <property type="entry name" value="50S ribosomal protein L14"/>
    <property type="match status" value="1"/>
</dbReference>
<dbReference type="Gene3D" id="2.40.150.20">
    <property type="entry name" value="Ribosomal protein L14"/>
    <property type="match status" value="1"/>
</dbReference>
<dbReference type="HAMAP" id="MF_01367">
    <property type="entry name" value="Ribosomal_uL14"/>
    <property type="match status" value="1"/>
</dbReference>
<dbReference type="InterPro" id="IPR000218">
    <property type="entry name" value="Ribosomal_uL14"/>
</dbReference>
<dbReference type="InterPro" id="IPR005745">
    <property type="entry name" value="Ribosomal_uL14_bac-type"/>
</dbReference>
<dbReference type="InterPro" id="IPR019972">
    <property type="entry name" value="Ribosomal_uL14_CS"/>
</dbReference>
<dbReference type="InterPro" id="IPR036853">
    <property type="entry name" value="Ribosomal_uL14_sf"/>
</dbReference>
<dbReference type="NCBIfam" id="TIGR01067">
    <property type="entry name" value="rplN_bact"/>
    <property type="match status" value="1"/>
</dbReference>
<dbReference type="PANTHER" id="PTHR11761">
    <property type="entry name" value="50S/60S RIBOSOMAL PROTEIN L14/L23"/>
    <property type="match status" value="1"/>
</dbReference>
<dbReference type="PANTHER" id="PTHR11761:SF3">
    <property type="entry name" value="LARGE RIBOSOMAL SUBUNIT PROTEIN UL14M"/>
    <property type="match status" value="1"/>
</dbReference>
<dbReference type="Pfam" id="PF00238">
    <property type="entry name" value="Ribosomal_L14"/>
    <property type="match status" value="1"/>
</dbReference>
<dbReference type="SMART" id="SM01374">
    <property type="entry name" value="Ribosomal_L14"/>
    <property type="match status" value="1"/>
</dbReference>
<dbReference type="SUPFAM" id="SSF50193">
    <property type="entry name" value="Ribosomal protein L14"/>
    <property type="match status" value="1"/>
</dbReference>
<dbReference type="PROSITE" id="PS00049">
    <property type="entry name" value="RIBOSOMAL_L14"/>
    <property type="match status" value="1"/>
</dbReference>
<evidence type="ECO:0000255" key="1">
    <source>
        <dbReference type="HAMAP-Rule" id="MF_01367"/>
    </source>
</evidence>
<evidence type="ECO:0000305" key="2"/>
<sequence>MIQTESRLDVADNTGAKSVLCIKVLGGSKRRYASVGDIIKVSVKEAAPRGRVKKGEVYSAVVVRTAKGIRRGDGSLVKFDGNAAVLLNSKLEPIGTRIFGPVTRELRTERFMKIVSLAPEVL</sequence>
<gene>
    <name evidence="1" type="primary">rplN</name>
    <name type="ordered locus">Ajs_0391</name>
</gene>
<accession>A1W318</accession>
<proteinExistence type="inferred from homology"/>
<name>RL14_ACISJ</name>
<organism>
    <name type="scientific">Acidovorax sp. (strain JS42)</name>
    <dbReference type="NCBI Taxonomy" id="232721"/>
    <lineage>
        <taxon>Bacteria</taxon>
        <taxon>Pseudomonadati</taxon>
        <taxon>Pseudomonadota</taxon>
        <taxon>Betaproteobacteria</taxon>
        <taxon>Burkholderiales</taxon>
        <taxon>Comamonadaceae</taxon>
        <taxon>Acidovorax</taxon>
    </lineage>
</organism>
<keyword id="KW-0687">Ribonucleoprotein</keyword>
<keyword id="KW-0689">Ribosomal protein</keyword>
<keyword id="KW-0694">RNA-binding</keyword>
<keyword id="KW-0699">rRNA-binding</keyword>
<reference key="1">
    <citation type="submission" date="2006-12" db="EMBL/GenBank/DDBJ databases">
        <title>Complete sequence of chromosome 1 of Acidovorax sp. JS42.</title>
        <authorList>
            <person name="Copeland A."/>
            <person name="Lucas S."/>
            <person name="Lapidus A."/>
            <person name="Barry K."/>
            <person name="Detter J.C."/>
            <person name="Glavina del Rio T."/>
            <person name="Dalin E."/>
            <person name="Tice H."/>
            <person name="Pitluck S."/>
            <person name="Chertkov O."/>
            <person name="Brettin T."/>
            <person name="Bruce D."/>
            <person name="Han C."/>
            <person name="Tapia R."/>
            <person name="Gilna P."/>
            <person name="Schmutz J."/>
            <person name="Larimer F."/>
            <person name="Land M."/>
            <person name="Hauser L."/>
            <person name="Kyrpides N."/>
            <person name="Kim E."/>
            <person name="Stahl D."/>
            <person name="Richardson P."/>
        </authorList>
    </citation>
    <scope>NUCLEOTIDE SEQUENCE [LARGE SCALE GENOMIC DNA]</scope>
    <source>
        <strain>JS42</strain>
    </source>
</reference>
<feature type="chain" id="PRO_1000055499" description="Large ribosomal subunit protein uL14">
    <location>
        <begin position="1"/>
        <end position="122"/>
    </location>
</feature>
<comment type="function">
    <text evidence="1">Binds to 23S rRNA. Forms part of two intersubunit bridges in the 70S ribosome.</text>
</comment>
<comment type="subunit">
    <text evidence="1">Part of the 50S ribosomal subunit. Forms a cluster with proteins L3 and L19. In the 70S ribosome, L14 and L19 interact and together make contacts with the 16S rRNA in bridges B5 and B8.</text>
</comment>
<comment type="similarity">
    <text evidence="1">Belongs to the universal ribosomal protein uL14 family.</text>
</comment>